<organism>
    <name type="scientific">Neisseria gonorrhoeae (strain NCCP11945)</name>
    <dbReference type="NCBI Taxonomy" id="521006"/>
    <lineage>
        <taxon>Bacteria</taxon>
        <taxon>Pseudomonadati</taxon>
        <taxon>Pseudomonadota</taxon>
        <taxon>Betaproteobacteria</taxon>
        <taxon>Neisseriales</taxon>
        <taxon>Neisseriaceae</taxon>
        <taxon>Neisseria</taxon>
    </lineage>
</organism>
<accession>B4RLL0</accession>
<feature type="chain" id="PRO_1000089465" description="Octanoyltransferase">
    <location>
        <begin position="1"/>
        <end position="207"/>
    </location>
</feature>
<feature type="domain" description="BPL/LPL catalytic" evidence="2">
    <location>
        <begin position="27"/>
        <end position="203"/>
    </location>
</feature>
<feature type="active site" description="Acyl-thioester intermediate" evidence="1">
    <location>
        <position position="164"/>
    </location>
</feature>
<feature type="binding site" evidence="1">
    <location>
        <begin position="66"/>
        <end position="73"/>
    </location>
    <ligand>
        <name>substrate</name>
    </ligand>
</feature>
<feature type="binding site" evidence="1">
    <location>
        <begin position="133"/>
        <end position="135"/>
    </location>
    <ligand>
        <name>substrate</name>
    </ligand>
</feature>
<feature type="binding site" evidence="1">
    <location>
        <begin position="146"/>
        <end position="148"/>
    </location>
    <ligand>
        <name>substrate</name>
    </ligand>
</feature>
<feature type="site" description="Lowers pKa of active site Cys" evidence="1">
    <location>
        <position position="130"/>
    </location>
</feature>
<protein>
    <recommendedName>
        <fullName evidence="1">Octanoyltransferase</fullName>
        <ecNumber evidence="1">2.3.1.181</ecNumber>
    </recommendedName>
    <alternativeName>
        <fullName evidence="1">Lipoate-protein ligase B</fullName>
    </alternativeName>
    <alternativeName>
        <fullName evidence="1">Lipoyl/octanoyl transferase</fullName>
    </alternativeName>
    <alternativeName>
        <fullName evidence="1">Octanoyl-[acyl-carrier-protein]-protein N-octanoyltransferase</fullName>
    </alternativeName>
</protein>
<comment type="function">
    <text evidence="1">Catalyzes the transfer of endogenously produced octanoic acid from octanoyl-acyl-carrier-protein onto the lipoyl domains of lipoate-dependent enzymes. Lipoyl-ACP can also act as a substrate although octanoyl-ACP is likely to be the physiological substrate.</text>
</comment>
<comment type="catalytic activity">
    <reaction evidence="1">
        <text>octanoyl-[ACP] + L-lysyl-[protein] = N(6)-octanoyl-L-lysyl-[protein] + holo-[ACP] + H(+)</text>
        <dbReference type="Rhea" id="RHEA:17665"/>
        <dbReference type="Rhea" id="RHEA-COMP:9636"/>
        <dbReference type="Rhea" id="RHEA-COMP:9685"/>
        <dbReference type="Rhea" id="RHEA-COMP:9752"/>
        <dbReference type="Rhea" id="RHEA-COMP:9928"/>
        <dbReference type="ChEBI" id="CHEBI:15378"/>
        <dbReference type="ChEBI" id="CHEBI:29969"/>
        <dbReference type="ChEBI" id="CHEBI:64479"/>
        <dbReference type="ChEBI" id="CHEBI:78463"/>
        <dbReference type="ChEBI" id="CHEBI:78809"/>
        <dbReference type="EC" id="2.3.1.181"/>
    </reaction>
</comment>
<comment type="pathway">
    <text evidence="1">Protein modification; protein lipoylation via endogenous pathway; protein N(6)-(lipoyl)lysine from octanoyl-[acyl-carrier-protein]: step 1/2.</text>
</comment>
<comment type="subcellular location">
    <subcellularLocation>
        <location evidence="1">Cytoplasm</location>
    </subcellularLocation>
</comment>
<comment type="miscellaneous">
    <text evidence="1">In the reaction, the free carboxyl group of octanoic acid is attached via an amide linkage to the epsilon-amino group of a specific lysine residue of lipoyl domains of lipoate-dependent enzymes.</text>
</comment>
<comment type="similarity">
    <text evidence="1">Belongs to the LipB family.</text>
</comment>
<sequence>MKIIHKGLVEYLPTFEAMKTFNAGRNADTEDELWVVEHPPVFTQGLAGKPEHLLIRDDIPVVQIDRGGQITYHGPGQLVVYTMIDFKRRKTSVRNIVSALENSIIATLAEYGIEAAADPKRPGIYVGERKIASLGLRIKNGSVYHGLALNVNMDLSPFTQINPCGYAGMEMTQIADFVQPCPAPDEVASKLTAHLETQLTPKADNNE</sequence>
<proteinExistence type="inferred from homology"/>
<dbReference type="EC" id="2.3.1.181" evidence="1"/>
<dbReference type="EMBL" id="CP001050">
    <property type="protein sequence ID" value="ACF29697.1"/>
    <property type="molecule type" value="Genomic_DNA"/>
</dbReference>
<dbReference type="RefSeq" id="WP_003688623.1">
    <property type="nucleotide sequence ID" value="NC_011035.1"/>
</dbReference>
<dbReference type="SMR" id="B4RLL0"/>
<dbReference type="GeneID" id="66753130"/>
<dbReference type="KEGG" id="ngk:NGK_1020"/>
<dbReference type="HOGENOM" id="CLU_035168_3_1_4"/>
<dbReference type="UniPathway" id="UPA00538">
    <property type="reaction ID" value="UER00592"/>
</dbReference>
<dbReference type="Proteomes" id="UP000002564">
    <property type="component" value="Chromosome"/>
</dbReference>
<dbReference type="GO" id="GO:0005737">
    <property type="term" value="C:cytoplasm"/>
    <property type="evidence" value="ECO:0007669"/>
    <property type="project" value="UniProtKB-SubCell"/>
</dbReference>
<dbReference type="GO" id="GO:0033819">
    <property type="term" value="F:lipoyl(octanoyl) transferase activity"/>
    <property type="evidence" value="ECO:0007669"/>
    <property type="project" value="UniProtKB-EC"/>
</dbReference>
<dbReference type="GO" id="GO:0036211">
    <property type="term" value="P:protein modification process"/>
    <property type="evidence" value="ECO:0007669"/>
    <property type="project" value="InterPro"/>
</dbReference>
<dbReference type="CDD" id="cd16444">
    <property type="entry name" value="LipB"/>
    <property type="match status" value="1"/>
</dbReference>
<dbReference type="FunFam" id="3.30.930.10:FF:000020">
    <property type="entry name" value="Octanoyltransferase"/>
    <property type="match status" value="1"/>
</dbReference>
<dbReference type="Gene3D" id="3.30.930.10">
    <property type="entry name" value="Bira Bifunctional Protein, Domain 2"/>
    <property type="match status" value="1"/>
</dbReference>
<dbReference type="HAMAP" id="MF_00013">
    <property type="entry name" value="LipB"/>
    <property type="match status" value="1"/>
</dbReference>
<dbReference type="InterPro" id="IPR045864">
    <property type="entry name" value="aa-tRNA-synth_II/BPL/LPL"/>
</dbReference>
<dbReference type="InterPro" id="IPR004143">
    <property type="entry name" value="BPL_LPL_catalytic"/>
</dbReference>
<dbReference type="InterPro" id="IPR000544">
    <property type="entry name" value="Octanoyltransferase"/>
</dbReference>
<dbReference type="InterPro" id="IPR020605">
    <property type="entry name" value="Octanoyltransferase_CS"/>
</dbReference>
<dbReference type="NCBIfam" id="TIGR00214">
    <property type="entry name" value="lipB"/>
    <property type="match status" value="1"/>
</dbReference>
<dbReference type="NCBIfam" id="NF010922">
    <property type="entry name" value="PRK14342.1"/>
    <property type="match status" value="1"/>
</dbReference>
<dbReference type="PANTHER" id="PTHR10993:SF7">
    <property type="entry name" value="LIPOYLTRANSFERASE 2, MITOCHONDRIAL-RELATED"/>
    <property type="match status" value="1"/>
</dbReference>
<dbReference type="PANTHER" id="PTHR10993">
    <property type="entry name" value="OCTANOYLTRANSFERASE"/>
    <property type="match status" value="1"/>
</dbReference>
<dbReference type="Pfam" id="PF21948">
    <property type="entry name" value="LplA-B_cat"/>
    <property type="match status" value="1"/>
</dbReference>
<dbReference type="PIRSF" id="PIRSF016262">
    <property type="entry name" value="LPLase"/>
    <property type="match status" value="1"/>
</dbReference>
<dbReference type="SUPFAM" id="SSF55681">
    <property type="entry name" value="Class II aaRS and biotin synthetases"/>
    <property type="match status" value="1"/>
</dbReference>
<dbReference type="PROSITE" id="PS51733">
    <property type="entry name" value="BPL_LPL_CATALYTIC"/>
    <property type="match status" value="1"/>
</dbReference>
<dbReference type="PROSITE" id="PS01313">
    <property type="entry name" value="LIPB"/>
    <property type="match status" value="1"/>
</dbReference>
<gene>
    <name evidence="1" type="primary">lipB</name>
    <name type="ordered locus">NGK_1020</name>
</gene>
<evidence type="ECO:0000255" key="1">
    <source>
        <dbReference type="HAMAP-Rule" id="MF_00013"/>
    </source>
</evidence>
<evidence type="ECO:0000255" key="2">
    <source>
        <dbReference type="PROSITE-ProRule" id="PRU01067"/>
    </source>
</evidence>
<name>LIPB_NEIG2</name>
<keyword id="KW-0012">Acyltransferase</keyword>
<keyword id="KW-0963">Cytoplasm</keyword>
<keyword id="KW-0808">Transferase</keyword>
<reference key="1">
    <citation type="journal article" date="2008" name="J. Bacteriol.">
        <title>Complete genome sequence of Neisseria gonorrhoeae NCCP11945.</title>
        <authorList>
            <person name="Chung G.T."/>
            <person name="Yoo J.S."/>
            <person name="Oh H.B."/>
            <person name="Lee Y.S."/>
            <person name="Cha S.H."/>
            <person name="Kim S.J."/>
            <person name="Yoo C.K."/>
        </authorList>
    </citation>
    <scope>NUCLEOTIDE SEQUENCE [LARGE SCALE GENOMIC DNA]</scope>
    <source>
        <strain>NCCP11945</strain>
    </source>
</reference>